<feature type="chain" id="PRO_0000079836" description="Prespore protein Dd31">
    <location>
        <begin position="1"/>
        <end position="269"/>
    </location>
</feature>
<feature type="transmembrane region" description="Helical" evidence="1">
    <location>
        <begin position="111"/>
        <end position="131"/>
    </location>
</feature>
<feature type="transmembrane region" description="Helical" evidence="1">
    <location>
        <begin position="139"/>
        <end position="159"/>
    </location>
</feature>
<feature type="transmembrane region" description="Helical" evidence="1">
    <location>
        <begin position="177"/>
        <end position="197"/>
    </location>
</feature>
<feature type="transmembrane region" description="Helical" evidence="1">
    <location>
        <begin position="225"/>
        <end position="245"/>
    </location>
</feature>
<feature type="region of interest" description="Disordered" evidence="2">
    <location>
        <begin position="1"/>
        <end position="35"/>
    </location>
</feature>
<feature type="compositionally biased region" description="Polar residues" evidence="2">
    <location>
        <begin position="1"/>
        <end position="17"/>
    </location>
</feature>
<feature type="compositionally biased region" description="Low complexity" evidence="2">
    <location>
        <begin position="18"/>
        <end position="29"/>
    </location>
</feature>
<name>DD31_DICDI</name>
<accession>Q02465</accession>
<accession>Q54I02</accession>
<sequence length="269" mass="30620">MEHNNNPGTPQMSSEFPASTTQTSSSAAAYDNSSHFEKEQSLMRWEQDLKLRERALANNQSAADITGPHVVVPAPATAHPRQANFPSSYPMIRLNLEEDIAIREYRQIVKFGIFVFLWEAAALVYNWVVSIGTIVYSAVDNFFLALFYMIVGVPTLYFLTRKLYRAASVPERARKSYAYLMALLGVVLFNIIFFVGFKRSGMNGLIWVISLFHNDHNAVGAMATVSLFFWFVGVFLTIALFIMYLRLNNTKRQRGEIQNAGFREYIKSR</sequence>
<proteinExistence type="evidence at protein level"/>
<evidence type="ECO:0000255" key="1"/>
<evidence type="ECO:0000256" key="2">
    <source>
        <dbReference type="SAM" id="MobiDB-lite"/>
    </source>
</evidence>
<evidence type="ECO:0000269" key="3">
    <source>
    </source>
</evidence>
<evidence type="ECO:0000305" key="4"/>
<gene>
    <name type="primary">spiA</name>
    <name type="ORF">DDB_G0289075</name>
</gene>
<reference key="1">
    <citation type="journal article" date="1991" name="Dev. Biol.">
        <title>A prespore gene, Dd31, expressed during culmination of Dictyostelium discoideum.</title>
        <authorList>
            <person name="Richardson D.L."/>
            <person name="Hong C.B."/>
            <person name="Loomis W.F."/>
        </authorList>
    </citation>
    <scope>NUCLEOTIDE SEQUENCE [GENOMIC DNA]</scope>
    <source>
        <strain>AX4</strain>
    </source>
</reference>
<reference key="2">
    <citation type="journal article" date="2005" name="Nature">
        <title>The genome of the social amoeba Dictyostelium discoideum.</title>
        <authorList>
            <person name="Eichinger L."/>
            <person name="Pachebat J.A."/>
            <person name="Gloeckner G."/>
            <person name="Rajandream M.A."/>
            <person name="Sucgang R."/>
            <person name="Berriman M."/>
            <person name="Song J."/>
            <person name="Olsen R."/>
            <person name="Szafranski K."/>
            <person name="Xu Q."/>
            <person name="Tunggal B."/>
            <person name="Kummerfeld S."/>
            <person name="Madera M."/>
            <person name="Konfortov B.A."/>
            <person name="Rivero F."/>
            <person name="Bankier A.T."/>
            <person name="Lehmann R."/>
            <person name="Hamlin N."/>
            <person name="Davies R."/>
            <person name="Gaudet P."/>
            <person name="Fey P."/>
            <person name="Pilcher K."/>
            <person name="Chen G."/>
            <person name="Saunders D."/>
            <person name="Sodergren E.J."/>
            <person name="Davis P."/>
            <person name="Kerhornou A."/>
            <person name="Nie X."/>
            <person name="Hall N."/>
            <person name="Anjard C."/>
            <person name="Hemphill L."/>
            <person name="Bason N."/>
            <person name="Farbrother P."/>
            <person name="Desany B."/>
            <person name="Just E."/>
            <person name="Morio T."/>
            <person name="Rost R."/>
            <person name="Churcher C.M."/>
            <person name="Cooper J."/>
            <person name="Haydock S."/>
            <person name="van Driessche N."/>
            <person name="Cronin A."/>
            <person name="Goodhead I."/>
            <person name="Muzny D.M."/>
            <person name="Mourier T."/>
            <person name="Pain A."/>
            <person name="Lu M."/>
            <person name="Harper D."/>
            <person name="Lindsay R."/>
            <person name="Hauser H."/>
            <person name="James K.D."/>
            <person name="Quiles M."/>
            <person name="Madan Babu M."/>
            <person name="Saito T."/>
            <person name="Buchrieser C."/>
            <person name="Wardroper A."/>
            <person name="Felder M."/>
            <person name="Thangavelu M."/>
            <person name="Johnson D."/>
            <person name="Knights A."/>
            <person name="Loulseged H."/>
            <person name="Mungall K.L."/>
            <person name="Oliver K."/>
            <person name="Price C."/>
            <person name="Quail M.A."/>
            <person name="Urushihara H."/>
            <person name="Hernandez J."/>
            <person name="Rabbinowitsch E."/>
            <person name="Steffen D."/>
            <person name="Sanders M."/>
            <person name="Ma J."/>
            <person name="Kohara Y."/>
            <person name="Sharp S."/>
            <person name="Simmonds M.N."/>
            <person name="Spiegler S."/>
            <person name="Tivey A."/>
            <person name="Sugano S."/>
            <person name="White B."/>
            <person name="Walker D."/>
            <person name="Woodward J.R."/>
            <person name="Winckler T."/>
            <person name="Tanaka Y."/>
            <person name="Shaulsky G."/>
            <person name="Schleicher M."/>
            <person name="Weinstock G.M."/>
            <person name="Rosenthal A."/>
            <person name="Cox E.C."/>
            <person name="Chisholm R.L."/>
            <person name="Gibbs R.A."/>
            <person name="Loomis W.F."/>
            <person name="Platzer M."/>
            <person name="Kay R.R."/>
            <person name="Williams J.G."/>
            <person name="Dear P.H."/>
            <person name="Noegel A.A."/>
            <person name="Barrell B.G."/>
            <person name="Kuspa A."/>
        </authorList>
    </citation>
    <scope>NUCLEOTIDE SEQUENCE [LARGE SCALE GENOMIC DNA]</scope>
    <source>
        <strain>AX4</strain>
    </source>
</reference>
<reference key="3">
    <citation type="journal article" date="1992" name="Genes Dev.">
        <title>Disruption of the sporulation-specific gene spiA in Dictyostelium discoideum leads to spore instability.</title>
        <authorList>
            <person name="Richardson D.L."/>
            <person name="Loomis W.F."/>
        </authorList>
    </citation>
    <scope>CHARACTERIZATION</scope>
</reference>
<reference key="4">
    <citation type="journal article" date="2007" name="Dev. Biol.">
        <title>A GPCR involved in post aggregation events in Dictyostelium discoideum.</title>
        <authorList>
            <person name="Prabhu Y."/>
            <person name="Mondal S."/>
            <person name="Eichinger L."/>
            <person name="Noegel A.A."/>
        </authorList>
    </citation>
    <scope>DEVELOPMENTAL STAGE</scope>
    <scope>INDUCTION [LARGE SCALE ANALYSIS]</scope>
</reference>
<keyword id="KW-0472">Membrane</keyword>
<keyword id="KW-1185">Reference proteome</keyword>
<keyword id="KW-0812">Transmembrane</keyword>
<keyword id="KW-1133">Transmembrane helix</keyword>
<comment type="subcellular location">
    <subcellularLocation>
        <location evidence="4">Membrane</location>
        <topology evidence="4">Multi-pass membrane protein</topology>
    </subcellularLocation>
    <subcellularLocation>
        <location>Spore coat</location>
    </subcellularLocation>
    <text>Associated with the inner face of spore coat.</text>
</comment>
<comment type="developmental stage">
    <text evidence="3">Expressed late in development and immediately prior to spore formation and in spores during culmination.</text>
</comment>
<comment type="induction">
    <text evidence="3">Induced by srfA, during development. Down-regulated in grlA null-cells at 16 hours of starvation.</text>
</comment>
<comment type="similarity">
    <text evidence="4">Belongs to the SCAMP family.</text>
</comment>
<organism>
    <name type="scientific">Dictyostelium discoideum</name>
    <name type="common">Social amoeba</name>
    <dbReference type="NCBI Taxonomy" id="44689"/>
    <lineage>
        <taxon>Eukaryota</taxon>
        <taxon>Amoebozoa</taxon>
        <taxon>Evosea</taxon>
        <taxon>Eumycetozoa</taxon>
        <taxon>Dictyostelia</taxon>
        <taxon>Dictyosteliales</taxon>
        <taxon>Dictyosteliaceae</taxon>
        <taxon>Dictyostelium</taxon>
    </lineage>
</organism>
<protein>
    <recommendedName>
        <fullName>Prespore protein Dd31</fullName>
    </recommendedName>
</protein>
<dbReference type="EMBL" id="X54452">
    <property type="protein sequence ID" value="CAA38320.1"/>
    <property type="molecule type" value="Genomic_DNA"/>
</dbReference>
<dbReference type="EMBL" id="AAFI02000130">
    <property type="protein sequence ID" value="EAL62887.1"/>
    <property type="molecule type" value="Genomic_DNA"/>
</dbReference>
<dbReference type="PIR" id="S16671">
    <property type="entry name" value="S16671"/>
</dbReference>
<dbReference type="RefSeq" id="XP_636403.1">
    <property type="nucleotide sequence ID" value="XM_631311.1"/>
</dbReference>
<dbReference type="SMR" id="Q02465"/>
<dbReference type="STRING" id="44689.Q02465"/>
<dbReference type="PaxDb" id="44689-DDB0191438"/>
<dbReference type="EnsemblProtists" id="EAL62887">
    <property type="protein sequence ID" value="EAL62887"/>
    <property type="gene ID" value="DDB_G0289075"/>
</dbReference>
<dbReference type="GeneID" id="8626962"/>
<dbReference type="KEGG" id="ddi:DDB_G0289075"/>
<dbReference type="dictyBase" id="DDB_G0289075">
    <property type="gene designation" value="spiA"/>
</dbReference>
<dbReference type="VEuPathDB" id="AmoebaDB:DDB_G0289075"/>
<dbReference type="eggNOG" id="ENOG502RBVX">
    <property type="taxonomic scope" value="Eukaryota"/>
</dbReference>
<dbReference type="HOGENOM" id="CLU_1035987_0_0_1"/>
<dbReference type="InParanoid" id="Q02465"/>
<dbReference type="OMA" id="FIMYLRL"/>
<dbReference type="PhylomeDB" id="Q02465"/>
<dbReference type="Reactome" id="R-DDI-6798695">
    <property type="pathway name" value="Neutrophil degranulation"/>
</dbReference>
<dbReference type="PRO" id="PR:Q02465"/>
<dbReference type="Proteomes" id="UP000002195">
    <property type="component" value="Chromosome 5"/>
</dbReference>
<dbReference type="GO" id="GO:0055038">
    <property type="term" value="C:recycling endosome membrane"/>
    <property type="evidence" value="ECO:0000318"/>
    <property type="project" value="GO_Central"/>
</dbReference>
<dbReference type="GO" id="GO:0031160">
    <property type="term" value="C:spore wall"/>
    <property type="evidence" value="ECO:0000314"/>
    <property type="project" value="dictyBase"/>
</dbReference>
<dbReference type="GO" id="GO:0032588">
    <property type="term" value="C:trans-Golgi network membrane"/>
    <property type="evidence" value="ECO:0000318"/>
    <property type="project" value="GO_Central"/>
</dbReference>
<dbReference type="GO" id="GO:0031154">
    <property type="term" value="P:culmination involved in sorocarp development"/>
    <property type="evidence" value="ECO:0000270"/>
    <property type="project" value="dictyBase"/>
</dbReference>
<dbReference type="GO" id="GO:0015031">
    <property type="term" value="P:protein transport"/>
    <property type="evidence" value="ECO:0000318"/>
    <property type="project" value="GO_Central"/>
</dbReference>
<dbReference type="GO" id="GO:0030587">
    <property type="term" value="P:sorocarp development"/>
    <property type="evidence" value="ECO:0000315"/>
    <property type="project" value="dictyBase"/>
</dbReference>
<dbReference type="InterPro" id="IPR007273">
    <property type="entry name" value="SCAMP"/>
</dbReference>
<dbReference type="PANTHER" id="PTHR10687:SF2">
    <property type="entry name" value="SECRETORY CARRIER-ASSOCIATED MEMBRANE PROTEIN"/>
    <property type="match status" value="1"/>
</dbReference>
<dbReference type="PANTHER" id="PTHR10687">
    <property type="entry name" value="SECRETORY CARRIER-ASSOCIATED MEMBRANE PROTEIN SCAMP"/>
    <property type="match status" value="1"/>
</dbReference>
<dbReference type="Pfam" id="PF04144">
    <property type="entry name" value="SCAMP"/>
    <property type="match status" value="1"/>
</dbReference>